<reference key="1">
    <citation type="journal article" date="2008" name="PLoS ONE">
        <title>Comparative analysis of Acinetobacters: three genomes for three lifestyles.</title>
        <authorList>
            <person name="Vallenet D."/>
            <person name="Nordmann P."/>
            <person name="Barbe V."/>
            <person name="Poirel L."/>
            <person name="Mangenot S."/>
            <person name="Bataille E."/>
            <person name="Dossat C."/>
            <person name="Gas S."/>
            <person name="Kreimeyer A."/>
            <person name="Lenoble P."/>
            <person name="Oztas S."/>
            <person name="Poulain J."/>
            <person name="Segurens B."/>
            <person name="Robert C."/>
            <person name="Abergel C."/>
            <person name="Claverie J.-M."/>
            <person name="Raoult D."/>
            <person name="Medigue C."/>
            <person name="Weissenbach J."/>
            <person name="Cruveiller S."/>
        </authorList>
    </citation>
    <scope>NUCLEOTIDE SEQUENCE [LARGE SCALE GENOMIC DNA]</scope>
    <source>
        <strain>SDF</strain>
    </source>
</reference>
<accession>B0VPU0</accession>
<protein>
    <recommendedName>
        <fullName evidence="1">6,7-dimethyl-8-ribityllumazine synthase</fullName>
        <shortName evidence="1">DMRL synthase</shortName>
        <shortName evidence="1">LS</shortName>
        <shortName evidence="1">Lumazine synthase</shortName>
        <ecNumber evidence="1">2.5.1.78</ecNumber>
    </recommendedName>
</protein>
<comment type="function">
    <text evidence="1">Catalyzes the formation of 6,7-dimethyl-8-ribityllumazine by condensation of 5-amino-6-(D-ribitylamino)uracil with 3,4-dihydroxy-2-butanone 4-phosphate. This is the penultimate step in the biosynthesis of riboflavin.</text>
</comment>
<comment type="catalytic activity">
    <reaction evidence="1">
        <text>(2S)-2-hydroxy-3-oxobutyl phosphate + 5-amino-6-(D-ribitylamino)uracil = 6,7-dimethyl-8-(1-D-ribityl)lumazine + phosphate + 2 H2O + H(+)</text>
        <dbReference type="Rhea" id="RHEA:26152"/>
        <dbReference type="ChEBI" id="CHEBI:15377"/>
        <dbReference type="ChEBI" id="CHEBI:15378"/>
        <dbReference type="ChEBI" id="CHEBI:15934"/>
        <dbReference type="ChEBI" id="CHEBI:43474"/>
        <dbReference type="ChEBI" id="CHEBI:58201"/>
        <dbReference type="ChEBI" id="CHEBI:58830"/>
        <dbReference type="EC" id="2.5.1.78"/>
    </reaction>
</comment>
<comment type="pathway">
    <text evidence="1">Cofactor biosynthesis; riboflavin biosynthesis; riboflavin from 2-hydroxy-3-oxobutyl phosphate and 5-amino-6-(D-ribitylamino)uracil: step 1/2.</text>
</comment>
<comment type="subunit">
    <text evidence="1">Forms an icosahedral capsid composed of 60 subunits, arranged as a dodecamer of pentamers.</text>
</comment>
<comment type="similarity">
    <text evidence="1">Belongs to the DMRL synthase family.</text>
</comment>
<feature type="chain" id="PRO_1000098154" description="6,7-dimethyl-8-ribityllumazine synthase">
    <location>
        <begin position="1"/>
        <end position="156"/>
    </location>
</feature>
<feature type="active site" description="Proton donor" evidence="1">
    <location>
        <position position="91"/>
    </location>
</feature>
<feature type="binding site" evidence="1">
    <location>
        <position position="25"/>
    </location>
    <ligand>
        <name>5-amino-6-(D-ribitylamino)uracil</name>
        <dbReference type="ChEBI" id="CHEBI:15934"/>
    </ligand>
</feature>
<feature type="binding site" evidence="1">
    <location>
        <begin position="59"/>
        <end position="61"/>
    </location>
    <ligand>
        <name>5-amino-6-(D-ribitylamino)uracil</name>
        <dbReference type="ChEBI" id="CHEBI:15934"/>
    </ligand>
</feature>
<feature type="binding site" evidence="1">
    <location>
        <begin position="83"/>
        <end position="85"/>
    </location>
    <ligand>
        <name>5-amino-6-(D-ribitylamino)uracil</name>
        <dbReference type="ChEBI" id="CHEBI:15934"/>
    </ligand>
</feature>
<feature type="binding site" evidence="1">
    <location>
        <begin position="88"/>
        <end position="89"/>
    </location>
    <ligand>
        <name>(2S)-2-hydroxy-3-oxobutyl phosphate</name>
        <dbReference type="ChEBI" id="CHEBI:58830"/>
    </ligand>
</feature>
<feature type="binding site" evidence="1">
    <location>
        <position position="116"/>
    </location>
    <ligand>
        <name>5-amino-6-(D-ribitylamino)uracil</name>
        <dbReference type="ChEBI" id="CHEBI:15934"/>
    </ligand>
</feature>
<feature type="binding site" evidence="1">
    <location>
        <position position="130"/>
    </location>
    <ligand>
        <name>(2S)-2-hydroxy-3-oxobutyl phosphate</name>
        <dbReference type="ChEBI" id="CHEBI:58830"/>
    </ligand>
</feature>
<gene>
    <name evidence="1" type="primary">ribH</name>
    <name type="ordered locus">ABSDF3572</name>
</gene>
<name>RISB_ACIBS</name>
<keyword id="KW-0686">Riboflavin biosynthesis</keyword>
<keyword id="KW-0808">Transferase</keyword>
<dbReference type="EC" id="2.5.1.78" evidence="1"/>
<dbReference type="EMBL" id="CU468230">
    <property type="protein sequence ID" value="CAP02831.1"/>
    <property type="molecule type" value="Genomic_DNA"/>
</dbReference>
<dbReference type="SMR" id="B0VPU0"/>
<dbReference type="KEGG" id="abm:ABSDF3572"/>
<dbReference type="HOGENOM" id="CLU_089358_1_1_6"/>
<dbReference type="UniPathway" id="UPA00275">
    <property type="reaction ID" value="UER00404"/>
</dbReference>
<dbReference type="Proteomes" id="UP000001741">
    <property type="component" value="Chromosome"/>
</dbReference>
<dbReference type="GO" id="GO:0005829">
    <property type="term" value="C:cytosol"/>
    <property type="evidence" value="ECO:0007669"/>
    <property type="project" value="TreeGrafter"/>
</dbReference>
<dbReference type="GO" id="GO:0009349">
    <property type="term" value="C:riboflavin synthase complex"/>
    <property type="evidence" value="ECO:0007669"/>
    <property type="project" value="InterPro"/>
</dbReference>
<dbReference type="GO" id="GO:0000906">
    <property type="term" value="F:6,7-dimethyl-8-ribityllumazine synthase activity"/>
    <property type="evidence" value="ECO:0007669"/>
    <property type="project" value="UniProtKB-UniRule"/>
</dbReference>
<dbReference type="GO" id="GO:0009231">
    <property type="term" value="P:riboflavin biosynthetic process"/>
    <property type="evidence" value="ECO:0007669"/>
    <property type="project" value="UniProtKB-UniRule"/>
</dbReference>
<dbReference type="CDD" id="cd09209">
    <property type="entry name" value="Lumazine_synthase-I"/>
    <property type="match status" value="1"/>
</dbReference>
<dbReference type="FunFam" id="3.40.50.960:FF:000001">
    <property type="entry name" value="6,7-dimethyl-8-ribityllumazine synthase"/>
    <property type="match status" value="1"/>
</dbReference>
<dbReference type="Gene3D" id="3.40.50.960">
    <property type="entry name" value="Lumazine/riboflavin synthase"/>
    <property type="match status" value="1"/>
</dbReference>
<dbReference type="HAMAP" id="MF_00178">
    <property type="entry name" value="Lumazine_synth"/>
    <property type="match status" value="1"/>
</dbReference>
<dbReference type="InterPro" id="IPR034964">
    <property type="entry name" value="LS"/>
</dbReference>
<dbReference type="InterPro" id="IPR002180">
    <property type="entry name" value="LS/RS"/>
</dbReference>
<dbReference type="InterPro" id="IPR036467">
    <property type="entry name" value="LS/RS_sf"/>
</dbReference>
<dbReference type="NCBIfam" id="TIGR00114">
    <property type="entry name" value="lumazine-synth"/>
    <property type="match status" value="1"/>
</dbReference>
<dbReference type="NCBIfam" id="NF000812">
    <property type="entry name" value="PRK00061.1-4"/>
    <property type="match status" value="1"/>
</dbReference>
<dbReference type="PANTHER" id="PTHR21058:SF0">
    <property type="entry name" value="6,7-DIMETHYL-8-RIBITYLLUMAZINE SYNTHASE"/>
    <property type="match status" value="1"/>
</dbReference>
<dbReference type="PANTHER" id="PTHR21058">
    <property type="entry name" value="6,7-DIMETHYL-8-RIBITYLLUMAZINE SYNTHASE DMRL SYNTHASE LUMAZINE SYNTHASE"/>
    <property type="match status" value="1"/>
</dbReference>
<dbReference type="Pfam" id="PF00885">
    <property type="entry name" value="DMRL_synthase"/>
    <property type="match status" value="1"/>
</dbReference>
<dbReference type="SUPFAM" id="SSF52121">
    <property type="entry name" value="Lumazine synthase"/>
    <property type="match status" value="1"/>
</dbReference>
<sequence>MAIRRIEGLLHLASEGRYAILVGRFNSFVVEHLLEGAIDTLKRHGVNEDNITVIHAPGAWELPIVAKKLATSNQFDAIIALGAVIRGSTPHFDFVAGECAKGLGVVALESSLPVINGVLTTDSIEQAIERSGTKAGNKGSEAALTAIEMVNLLKAI</sequence>
<organism>
    <name type="scientific">Acinetobacter baumannii (strain SDF)</name>
    <dbReference type="NCBI Taxonomy" id="509170"/>
    <lineage>
        <taxon>Bacteria</taxon>
        <taxon>Pseudomonadati</taxon>
        <taxon>Pseudomonadota</taxon>
        <taxon>Gammaproteobacteria</taxon>
        <taxon>Moraxellales</taxon>
        <taxon>Moraxellaceae</taxon>
        <taxon>Acinetobacter</taxon>
        <taxon>Acinetobacter calcoaceticus/baumannii complex</taxon>
    </lineage>
</organism>
<evidence type="ECO:0000255" key="1">
    <source>
        <dbReference type="HAMAP-Rule" id="MF_00178"/>
    </source>
</evidence>
<proteinExistence type="inferred from homology"/>